<dbReference type="EC" id="2.7.7.38" evidence="1"/>
<dbReference type="EMBL" id="CP000886">
    <property type="protein sequence ID" value="ABX67906.1"/>
    <property type="molecule type" value="Genomic_DNA"/>
</dbReference>
<dbReference type="RefSeq" id="WP_000011576.1">
    <property type="nucleotide sequence ID" value="NC_010102.1"/>
</dbReference>
<dbReference type="SMR" id="A9N7U4"/>
<dbReference type="KEGG" id="spq:SPAB_02526"/>
<dbReference type="PATRIC" id="fig|1016998.12.peg.2393"/>
<dbReference type="HOGENOM" id="CLU_065038_1_0_6"/>
<dbReference type="BioCyc" id="SENT1016998:SPAB_RS10265-MONOMER"/>
<dbReference type="UniPathway" id="UPA00030"/>
<dbReference type="UniPathway" id="UPA00358">
    <property type="reaction ID" value="UER00476"/>
</dbReference>
<dbReference type="Proteomes" id="UP000008556">
    <property type="component" value="Chromosome"/>
</dbReference>
<dbReference type="GO" id="GO:0005829">
    <property type="term" value="C:cytosol"/>
    <property type="evidence" value="ECO:0007669"/>
    <property type="project" value="TreeGrafter"/>
</dbReference>
<dbReference type="GO" id="GO:0008690">
    <property type="term" value="F:3-deoxy-manno-octulosonate cytidylyltransferase activity"/>
    <property type="evidence" value="ECO:0007669"/>
    <property type="project" value="UniProtKB-UniRule"/>
</dbReference>
<dbReference type="GO" id="GO:0033468">
    <property type="term" value="P:CMP-keto-3-deoxy-D-manno-octulosonic acid biosynthetic process"/>
    <property type="evidence" value="ECO:0007669"/>
    <property type="project" value="UniProtKB-UniRule"/>
</dbReference>
<dbReference type="GO" id="GO:0009103">
    <property type="term" value="P:lipopolysaccharide biosynthetic process"/>
    <property type="evidence" value="ECO:0007669"/>
    <property type="project" value="UniProtKB-UniRule"/>
</dbReference>
<dbReference type="CDD" id="cd02517">
    <property type="entry name" value="CMP-KDO-Synthetase"/>
    <property type="match status" value="1"/>
</dbReference>
<dbReference type="FunFam" id="3.90.550.10:FF:000011">
    <property type="entry name" value="3-deoxy-manno-octulosonate cytidylyltransferase"/>
    <property type="match status" value="1"/>
</dbReference>
<dbReference type="Gene3D" id="3.90.550.10">
    <property type="entry name" value="Spore Coat Polysaccharide Biosynthesis Protein SpsA, Chain A"/>
    <property type="match status" value="1"/>
</dbReference>
<dbReference type="HAMAP" id="MF_00057">
    <property type="entry name" value="KdsB"/>
    <property type="match status" value="1"/>
</dbReference>
<dbReference type="InterPro" id="IPR003329">
    <property type="entry name" value="Cytidylyl_trans"/>
</dbReference>
<dbReference type="InterPro" id="IPR004528">
    <property type="entry name" value="KdsB"/>
</dbReference>
<dbReference type="InterPro" id="IPR029044">
    <property type="entry name" value="Nucleotide-diphossugar_trans"/>
</dbReference>
<dbReference type="NCBIfam" id="TIGR00466">
    <property type="entry name" value="kdsB"/>
    <property type="match status" value="1"/>
</dbReference>
<dbReference type="NCBIfam" id="NF003950">
    <property type="entry name" value="PRK05450.1-3"/>
    <property type="match status" value="1"/>
</dbReference>
<dbReference type="NCBIfam" id="NF003952">
    <property type="entry name" value="PRK05450.1-5"/>
    <property type="match status" value="1"/>
</dbReference>
<dbReference type="NCBIfam" id="NF009905">
    <property type="entry name" value="PRK13368.1"/>
    <property type="match status" value="1"/>
</dbReference>
<dbReference type="PANTHER" id="PTHR42866">
    <property type="entry name" value="3-DEOXY-MANNO-OCTULOSONATE CYTIDYLYLTRANSFERASE"/>
    <property type="match status" value="1"/>
</dbReference>
<dbReference type="PANTHER" id="PTHR42866:SF2">
    <property type="entry name" value="3-DEOXY-MANNO-OCTULOSONATE CYTIDYLYLTRANSFERASE, MITOCHONDRIAL"/>
    <property type="match status" value="1"/>
</dbReference>
<dbReference type="Pfam" id="PF02348">
    <property type="entry name" value="CTP_transf_3"/>
    <property type="match status" value="1"/>
</dbReference>
<dbReference type="SUPFAM" id="SSF53448">
    <property type="entry name" value="Nucleotide-diphospho-sugar transferases"/>
    <property type="match status" value="1"/>
</dbReference>
<proteinExistence type="inferred from homology"/>
<reference key="1">
    <citation type="submission" date="2007-11" db="EMBL/GenBank/DDBJ databases">
        <authorList>
            <consortium name="The Salmonella enterica serovar Paratyphi B Genome Sequencing Project"/>
            <person name="McClelland M."/>
            <person name="Sanderson E.K."/>
            <person name="Porwollik S."/>
            <person name="Spieth J."/>
            <person name="Clifton W.S."/>
            <person name="Fulton R."/>
            <person name="Cordes M."/>
            <person name="Wollam A."/>
            <person name="Shah N."/>
            <person name="Pepin K."/>
            <person name="Bhonagiri V."/>
            <person name="Nash W."/>
            <person name="Johnson M."/>
            <person name="Thiruvilangam P."/>
            <person name="Wilson R."/>
        </authorList>
    </citation>
    <scope>NUCLEOTIDE SEQUENCE [LARGE SCALE GENOMIC DNA]</scope>
    <source>
        <strain>ATCC BAA-1250 / SPB7</strain>
    </source>
</reference>
<keyword id="KW-0963">Cytoplasm</keyword>
<keyword id="KW-0448">Lipopolysaccharide biosynthesis</keyword>
<keyword id="KW-0548">Nucleotidyltransferase</keyword>
<keyword id="KW-0808">Transferase</keyword>
<protein>
    <recommendedName>
        <fullName evidence="1">3-deoxy-manno-octulosonate cytidylyltransferase</fullName>
        <ecNumber evidence="1">2.7.7.38</ecNumber>
    </recommendedName>
    <alternativeName>
        <fullName evidence="1">CMP-2-keto-3-deoxyoctulosonic acid synthase</fullName>
        <shortName evidence="1">CKS</shortName>
        <shortName evidence="1">CMP-KDO synthase</shortName>
    </alternativeName>
</protein>
<accession>A9N7U4</accession>
<name>KDSB_SALPB</name>
<organism>
    <name type="scientific">Salmonella paratyphi B (strain ATCC BAA-1250 / SPB7)</name>
    <dbReference type="NCBI Taxonomy" id="1016998"/>
    <lineage>
        <taxon>Bacteria</taxon>
        <taxon>Pseudomonadati</taxon>
        <taxon>Pseudomonadota</taxon>
        <taxon>Gammaproteobacteria</taxon>
        <taxon>Enterobacterales</taxon>
        <taxon>Enterobacteriaceae</taxon>
        <taxon>Salmonella</taxon>
    </lineage>
</organism>
<gene>
    <name evidence="1" type="primary">kdsB</name>
    <name type="ordered locus">SPAB_02526</name>
</gene>
<comment type="function">
    <text evidence="1">Activates KDO (a required 8-carbon sugar) for incorporation into bacterial lipopolysaccharide in Gram-negative bacteria.</text>
</comment>
<comment type="catalytic activity">
    <reaction evidence="1">
        <text>3-deoxy-alpha-D-manno-oct-2-ulosonate + CTP = CMP-3-deoxy-beta-D-manno-octulosonate + diphosphate</text>
        <dbReference type="Rhea" id="RHEA:23448"/>
        <dbReference type="ChEBI" id="CHEBI:33019"/>
        <dbReference type="ChEBI" id="CHEBI:37563"/>
        <dbReference type="ChEBI" id="CHEBI:85986"/>
        <dbReference type="ChEBI" id="CHEBI:85987"/>
        <dbReference type="EC" id="2.7.7.38"/>
    </reaction>
</comment>
<comment type="pathway">
    <text evidence="1">Nucleotide-sugar biosynthesis; CMP-3-deoxy-D-manno-octulosonate biosynthesis; CMP-3-deoxy-D-manno-octulosonate from 3-deoxy-D-manno-octulosonate and CTP: step 1/1.</text>
</comment>
<comment type="pathway">
    <text evidence="1">Bacterial outer membrane biogenesis; lipopolysaccharide biosynthesis.</text>
</comment>
<comment type="subcellular location">
    <subcellularLocation>
        <location evidence="1">Cytoplasm</location>
    </subcellularLocation>
</comment>
<comment type="similarity">
    <text evidence="1">Belongs to the KdsB family.</text>
</comment>
<feature type="chain" id="PRO_1000074999" description="3-deoxy-manno-octulosonate cytidylyltransferase">
    <location>
        <begin position="1"/>
        <end position="248"/>
    </location>
</feature>
<evidence type="ECO:0000255" key="1">
    <source>
        <dbReference type="HAMAP-Rule" id="MF_00057"/>
    </source>
</evidence>
<sequence>MSFVVIIPARFSSTRLPGKPLVDINGKPMIVHVLERARESGAERIIVATDHEDVARAVEAAGGEVCMTRADHQSGTERLAEVVEKCGFSDDTVIVNVQGDEPMIPAVIIRQVAENLAQRQVGMATLAVPIHSAEEAFNPNAVKVVLDAEGYALYFSRATIPWDRDRFAKSLETVGDTCLRHLGIYGYRAGFIRRYVSWQPSPLEHIEMLEQLRVLWYGEKIHVAVAKAVPGTGVDTADDLERVRAEMR</sequence>